<gene>
    <name evidence="1" type="primary">rpl16</name>
</gene>
<geneLocation type="chloroplast"/>
<reference key="1">
    <citation type="journal article" date="2007" name="BMC Genomics">
        <title>Comparative chloroplast genomics: analyses including new sequences from the angiosperms Nuphar advena and Ranunculus macranthus.</title>
        <authorList>
            <person name="Raubeson L.A."/>
            <person name="Peery R."/>
            <person name="Chumley T.W."/>
            <person name="Dziubek C."/>
            <person name="Fourcade H.M."/>
            <person name="Boore J.L."/>
            <person name="Jansen R.K."/>
        </authorList>
    </citation>
    <scope>NUCLEOTIDE SEQUENCE [LARGE SCALE GENOMIC DNA]</scope>
</reference>
<evidence type="ECO:0000255" key="1">
    <source>
        <dbReference type="HAMAP-Rule" id="MF_01342"/>
    </source>
</evidence>
<evidence type="ECO:0000305" key="2"/>
<dbReference type="EMBL" id="DQ359689">
    <property type="protein sequence ID" value="ABC70793.1"/>
    <property type="molecule type" value="Genomic_DNA"/>
</dbReference>
<dbReference type="RefSeq" id="YP_001004223.1">
    <property type="nucleotide sequence ID" value="NC_008796.1"/>
</dbReference>
<dbReference type="SMR" id="A1XGS5"/>
<dbReference type="GeneID" id="4712172"/>
<dbReference type="GO" id="GO:0009507">
    <property type="term" value="C:chloroplast"/>
    <property type="evidence" value="ECO:0007669"/>
    <property type="project" value="UniProtKB-SubCell"/>
</dbReference>
<dbReference type="GO" id="GO:0005762">
    <property type="term" value="C:mitochondrial large ribosomal subunit"/>
    <property type="evidence" value="ECO:0007669"/>
    <property type="project" value="TreeGrafter"/>
</dbReference>
<dbReference type="GO" id="GO:0019843">
    <property type="term" value="F:rRNA binding"/>
    <property type="evidence" value="ECO:0007669"/>
    <property type="project" value="InterPro"/>
</dbReference>
<dbReference type="GO" id="GO:0003735">
    <property type="term" value="F:structural constituent of ribosome"/>
    <property type="evidence" value="ECO:0007669"/>
    <property type="project" value="InterPro"/>
</dbReference>
<dbReference type="GO" id="GO:0032543">
    <property type="term" value="P:mitochondrial translation"/>
    <property type="evidence" value="ECO:0007669"/>
    <property type="project" value="TreeGrafter"/>
</dbReference>
<dbReference type="CDD" id="cd01433">
    <property type="entry name" value="Ribosomal_L16_L10e"/>
    <property type="match status" value="1"/>
</dbReference>
<dbReference type="FunFam" id="3.90.1170.10:FF:000001">
    <property type="entry name" value="50S ribosomal protein L16"/>
    <property type="match status" value="1"/>
</dbReference>
<dbReference type="Gene3D" id="3.90.1170.10">
    <property type="entry name" value="Ribosomal protein L10e/L16"/>
    <property type="match status" value="1"/>
</dbReference>
<dbReference type="HAMAP" id="MF_01342">
    <property type="entry name" value="Ribosomal_uL16"/>
    <property type="match status" value="1"/>
</dbReference>
<dbReference type="InterPro" id="IPR047873">
    <property type="entry name" value="Ribosomal_uL16"/>
</dbReference>
<dbReference type="InterPro" id="IPR000114">
    <property type="entry name" value="Ribosomal_uL16_bact-type"/>
</dbReference>
<dbReference type="InterPro" id="IPR020798">
    <property type="entry name" value="Ribosomal_uL16_CS"/>
</dbReference>
<dbReference type="InterPro" id="IPR016180">
    <property type="entry name" value="Ribosomal_uL16_dom"/>
</dbReference>
<dbReference type="InterPro" id="IPR036920">
    <property type="entry name" value="Ribosomal_uL16_sf"/>
</dbReference>
<dbReference type="NCBIfam" id="TIGR01164">
    <property type="entry name" value="rplP_bact"/>
    <property type="match status" value="1"/>
</dbReference>
<dbReference type="PANTHER" id="PTHR12220">
    <property type="entry name" value="50S/60S RIBOSOMAL PROTEIN L16"/>
    <property type="match status" value="1"/>
</dbReference>
<dbReference type="PANTHER" id="PTHR12220:SF13">
    <property type="entry name" value="LARGE RIBOSOMAL SUBUNIT PROTEIN UL16M"/>
    <property type="match status" value="1"/>
</dbReference>
<dbReference type="Pfam" id="PF00252">
    <property type="entry name" value="Ribosomal_L16"/>
    <property type="match status" value="1"/>
</dbReference>
<dbReference type="PRINTS" id="PR00060">
    <property type="entry name" value="RIBOSOMALL16"/>
</dbReference>
<dbReference type="SUPFAM" id="SSF54686">
    <property type="entry name" value="Ribosomal protein L16p/L10e"/>
    <property type="match status" value="1"/>
</dbReference>
<dbReference type="PROSITE" id="PS00586">
    <property type="entry name" value="RIBOSOMAL_L16_1"/>
    <property type="match status" value="1"/>
</dbReference>
<dbReference type="PROSITE" id="PS00701">
    <property type="entry name" value="RIBOSOMAL_L16_2"/>
    <property type="match status" value="1"/>
</dbReference>
<accession>A1XGS5</accession>
<protein>
    <recommendedName>
        <fullName evidence="1">Large ribosomal subunit protein uL16c</fullName>
    </recommendedName>
    <alternativeName>
        <fullName evidence="2">50S ribosomal protein L16, chloroplastic</fullName>
    </alternativeName>
</protein>
<name>RK16_RANMC</name>
<comment type="subunit">
    <text evidence="1">Part of the 50S ribosomal subunit.</text>
</comment>
<comment type="subcellular location">
    <subcellularLocation>
        <location>Plastid</location>
        <location>Chloroplast</location>
    </subcellularLocation>
</comment>
<comment type="similarity">
    <text evidence="1">Belongs to the universal ribosomal protein uL16 family.</text>
</comment>
<sequence length="135" mass="15284">MLSPKRTRFRKQHRGRMKGISYRGNRICFGGYALQALEPAWITSRQIEAGRRAMTRYARRGGKIWVRIFPDKPVTVRPAETRMGSGKGSPEFWVFVVKPGRILYEMGGVSEIVAREAISIAASKMPIRTQFIIAG</sequence>
<proteinExistence type="inferred from homology"/>
<keyword id="KW-0150">Chloroplast</keyword>
<keyword id="KW-0934">Plastid</keyword>
<keyword id="KW-0687">Ribonucleoprotein</keyword>
<keyword id="KW-0689">Ribosomal protein</keyword>
<organism>
    <name type="scientific">Ranunculus macranthus</name>
    <name type="common">Large buttercup</name>
    <dbReference type="NCBI Taxonomy" id="334596"/>
    <lineage>
        <taxon>Eukaryota</taxon>
        <taxon>Viridiplantae</taxon>
        <taxon>Streptophyta</taxon>
        <taxon>Embryophyta</taxon>
        <taxon>Tracheophyta</taxon>
        <taxon>Spermatophyta</taxon>
        <taxon>Magnoliopsida</taxon>
        <taxon>Ranunculales</taxon>
        <taxon>Ranunculaceae</taxon>
        <taxon>Ranunculoideae</taxon>
        <taxon>Ranunculeae</taxon>
        <taxon>Ranunculus</taxon>
    </lineage>
</organism>
<feature type="chain" id="PRO_0000354658" description="Large ribosomal subunit protein uL16c">
    <location>
        <begin position="1"/>
        <end position="135"/>
    </location>
</feature>